<accession>A9R013</accession>
<keyword id="KW-0050">Antiport</keyword>
<keyword id="KW-0997">Cell inner membrane</keyword>
<keyword id="KW-1003">Cell membrane</keyword>
<keyword id="KW-0406">Ion transport</keyword>
<keyword id="KW-0472">Membrane</keyword>
<keyword id="KW-0915">Sodium</keyword>
<keyword id="KW-0739">Sodium transport</keyword>
<keyword id="KW-0812">Transmembrane</keyword>
<keyword id="KW-1133">Transmembrane helix</keyword>
<keyword id="KW-0813">Transport</keyword>
<protein>
    <recommendedName>
        <fullName evidence="1">Na(+)/H(+) antiporter NhaA</fullName>
    </recommendedName>
    <alternativeName>
        <fullName evidence="1">Sodium/proton antiporter NhaA</fullName>
    </alternativeName>
</protein>
<comment type="function">
    <text evidence="1">Na(+)/H(+) antiporter that extrudes sodium in exchange for external protons.</text>
</comment>
<comment type="catalytic activity">
    <reaction evidence="1">
        <text>Na(+)(in) + 2 H(+)(out) = Na(+)(out) + 2 H(+)(in)</text>
        <dbReference type="Rhea" id="RHEA:29251"/>
        <dbReference type="ChEBI" id="CHEBI:15378"/>
        <dbReference type="ChEBI" id="CHEBI:29101"/>
    </reaction>
    <physiologicalReaction direction="left-to-right" evidence="1">
        <dbReference type="Rhea" id="RHEA:29252"/>
    </physiologicalReaction>
</comment>
<comment type="subcellular location">
    <subcellularLocation>
        <location evidence="1">Cell inner membrane</location>
        <topology evidence="1">Multi-pass membrane protein</topology>
    </subcellularLocation>
</comment>
<comment type="similarity">
    <text evidence="1">Belongs to the NhaA Na(+)/H(+) (TC 2.A.33) antiporter family.</text>
</comment>
<proteinExistence type="inferred from homology"/>
<gene>
    <name evidence="1" type="primary">nhaA</name>
    <name type="ordered locus">YpAngola_A0795</name>
</gene>
<organism>
    <name type="scientific">Yersinia pestis bv. Antiqua (strain Angola)</name>
    <dbReference type="NCBI Taxonomy" id="349746"/>
    <lineage>
        <taxon>Bacteria</taxon>
        <taxon>Pseudomonadati</taxon>
        <taxon>Pseudomonadota</taxon>
        <taxon>Gammaproteobacteria</taxon>
        <taxon>Enterobacterales</taxon>
        <taxon>Yersiniaceae</taxon>
        <taxon>Yersinia</taxon>
    </lineage>
</organism>
<name>NHAA_YERPG</name>
<dbReference type="EMBL" id="CP000901">
    <property type="protein sequence ID" value="ABX85644.1"/>
    <property type="molecule type" value="Genomic_DNA"/>
</dbReference>
<dbReference type="RefSeq" id="WP_012229125.1">
    <property type="nucleotide sequence ID" value="NC_010159.1"/>
</dbReference>
<dbReference type="SMR" id="A9R013"/>
<dbReference type="KEGG" id="ypg:YpAngola_A0795"/>
<dbReference type="PATRIC" id="fig|349746.12.peg.1743"/>
<dbReference type="GO" id="GO:0005886">
    <property type="term" value="C:plasma membrane"/>
    <property type="evidence" value="ECO:0007669"/>
    <property type="project" value="UniProtKB-SubCell"/>
</dbReference>
<dbReference type="GO" id="GO:0015385">
    <property type="term" value="F:sodium:proton antiporter activity"/>
    <property type="evidence" value="ECO:0007669"/>
    <property type="project" value="TreeGrafter"/>
</dbReference>
<dbReference type="GO" id="GO:0006885">
    <property type="term" value="P:regulation of pH"/>
    <property type="evidence" value="ECO:0007669"/>
    <property type="project" value="InterPro"/>
</dbReference>
<dbReference type="Gene3D" id="1.20.1530.10">
    <property type="entry name" value="Na+/H+ antiporter like domain"/>
    <property type="match status" value="1"/>
</dbReference>
<dbReference type="HAMAP" id="MF_01844">
    <property type="entry name" value="NhaA"/>
    <property type="match status" value="1"/>
</dbReference>
<dbReference type="InterPro" id="IPR023171">
    <property type="entry name" value="Na/H_antiporter_dom_sf"/>
</dbReference>
<dbReference type="InterPro" id="IPR004670">
    <property type="entry name" value="NhaA"/>
</dbReference>
<dbReference type="NCBIfam" id="TIGR00773">
    <property type="entry name" value="NhaA"/>
    <property type="match status" value="1"/>
</dbReference>
<dbReference type="NCBIfam" id="NF007111">
    <property type="entry name" value="PRK09560.1"/>
    <property type="match status" value="1"/>
</dbReference>
<dbReference type="NCBIfam" id="NF007112">
    <property type="entry name" value="PRK09561.1"/>
    <property type="match status" value="1"/>
</dbReference>
<dbReference type="PANTHER" id="PTHR30341:SF0">
    <property type="entry name" value="NA(+)_H(+) ANTIPORTER NHAA"/>
    <property type="match status" value="1"/>
</dbReference>
<dbReference type="PANTHER" id="PTHR30341">
    <property type="entry name" value="SODIUM ION/PROTON ANTIPORTER NHAA-RELATED"/>
    <property type="match status" value="1"/>
</dbReference>
<dbReference type="Pfam" id="PF06965">
    <property type="entry name" value="Na_H_antiport_1"/>
    <property type="match status" value="1"/>
</dbReference>
<evidence type="ECO:0000255" key="1">
    <source>
        <dbReference type="HAMAP-Rule" id="MF_01844"/>
    </source>
</evidence>
<sequence>MTNIIRQFLRQEAAGGLILIIAAAIALLMANSALQGVYQSFLDIPVSIKIASLDISKPLLLWINDGLMAVFFLMIGLEVKRELMEGSLAGRDKAVFPAIAALGGMLAPALIYLLFNGADEVTRQGWAIPAATDIAFALGVMALLGNRVPTGLKVFLLALAIIDDLGVIIIIALFYTQQVSLQSLGIAAAAIALLAYMNWRGVGKTSAYLLVGLVLWVCILKSGVHATLAGVIVGFMIPLHTQDQRSPSESLEHGLHPWVAYLILPLFAFANAGVSLQGVSLSGLTSLLPMGIATGLFIGKPLGIFTFSWLAVKLGIAKLPDAINFKQIFAVSVLCGIGFTMSIFIASLAFEGTDIALTTYSKLGILLGSTTAAVVGYSLLRLVLPAWRKAVNVR</sequence>
<reference key="1">
    <citation type="journal article" date="2010" name="J. Bacteriol.">
        <title>Genome sequence of the deep-rooted Yersinia pestis strain Angola reveals new insights into the evolution and pangenome of the plague bacterium.</title>
        <authorList>
            <person name="Eppinger M."/>
            <person name="Worsham P.L."/>
            <person name="Nikolich M.P."/>
            <person name="Riley D.R."/>
            <person name="Sebastian Y."/>
            <person name="Mou S."/>
            <person name="Achtman M."/>
            <person name="Lindler L.E."/>
            <person name="Ravel J."/>
        </authorList>
    </citation>
    <scope>NUCLEOTIDE SEQUENCE [LARGE SCALE GENOMIC DNA]</scope>
    <source>
        <strain>Angola</strain>
    </source>
</reference>
<feature type="chain" id="PRO_1000188445" description="Na(+)/H(+) antiporter NhaA">
    <location>
        <begin position="1"/>
        <end position="394"/>
    </location>
</feature>
<feature type="transmembrane region" description="Helical" evidence="1">
    <location>
        <begin position="14"/>
        <end position="34"/>
    </location>
</feature>
<feature type="transmembrane region" description="Helical" evidence="1">
    <location>
        <begin position="59"/>
        <end position="79"/>
    </location>
</feature>
<feature type="transmembrane region" description="Helical" evidence="1">
    <location>
        <begin position="95"/>
        <end position="115"/>
    </location>
</feature>
<feature type="transmembrane region" description="Helical" evidence="1">
    <location>
        <begin position="125"/>
        <end position="145"/>
    </location>
</feature>
<feature type="transmembrane region" description="Helical" evidence="1">
    <location>
        <begin position="154"/>
        <end position="174"/>
    </location>
</feature>
<feature type="transmembrane region" description="Helical" evidence="1">
    <location>
        <begin position="179"/>
        <end position="199"/>
    </location>
</feature>
<feature type="transmembrane region" description="Helical" evidence="1">
    <location>
        <begin position="213"/>
        <end position="233"/>
    </location>
</feature>
<feature type="transmembrane region" description="Helical" evidence="1">
    <location>
        <begin position="254"/>
        <end position="274"/>
    </location>
</feature>
<feature type="transmembrane region" description="Helical" evidence="1">
    <location>
        <begin position="292"/>
        <end position="312"/>
    </location>
</feature>
<feature type="transmembrane region" description="Helical" evidence="1">
    <location>
        <begin position="328"/>
        <end position="348"/>
    </location>
</feature>
<feature type="transmembrane region" description="Helical" evidence="1">
    <location>
        <begin position="363"/>
        <end position="383"/>
    </location>
</feature>